<dbReference type="EMBL" id="CP001175">
    <property type="protein sequence ID" value="ACK41233.1"/>
    <property type="molecule type" value="Genomic_DNA"/>
</dbReference>
<dbReference type="RefSeq" id="WP_003726733.1">
    <property type="nucleotide sequence ID" value="NC_011660.1"/>
</dbReference>
<dbReference type="SMR" id="B8DB08"/>
<dbReference type="GeneID" id="93240513"/>
<dbReference type="KEGG" id="lmh:LMHCC_2902"/>
<dbReference type="HOGENOM" id="CLU_044142_4_1_9"/>
<dbReference type="GO" id="GO:0022625">
    <property type="term" value="C:cytosolic large ribosomal subunit"/>
    <property type="evidence" value="ECO:0007669"/>
    <property type="project" value="TreeGrafter"/>
</dbReference>
<dbReference type="GO" id="GO:0019843">
    <property type="term" value="F:rRNA binding"/>
    <property type="evidence" value="ECO:0007669"/>
    <property type="project" value="UniProtKB-UniRule"/>
</dbReference>
<dbReference type="GO" id="GO:0003735">
    <property type="term" value="F:structural constituent of ribosome"/>
    <property type="evidence" value="ECO:0007669"/>
    <property type="project" value="InterPro"/>
</dbReference>
<dbReference type="GO" id="GO:0006412">
    <property type="term" value="P:translation"/>
    <property type="evidence" value="ECO:0007669"/>
    <property type="project" value="UniProtKB-UniRule"/>
</dbReference>
<dbReference type="FunFam" id="2.40.30.10:FF:000004">
    <property type="entry name" value="50S ribosomal protein L3"/>
    <property type="match status" value="1"/>
</dbReference>
<dbReference type="FunFam" id="3.30.160.810:FF:000002">
    <property type="entry name" value="50S ribosomal protein L3"/>
    <property type="match status" value="1"/>
</dbReference>
<dbReference type="Gene3D" id="3.30.160.810">
    <property type="match status" value="1"/>
</dbReference>
<dbReference type="Gene3D" id="2.40.30.10">
    <property type="entry name" value="Translation factors"/>
    <property type="match status" value="1"/>
</dbReference>
<dbReference type="HAMAP" id="MF_01325_B">
    <property type="entry name" value="Ribosomal_uL3_B"/>
    <property type="match status" value="1"/>
</dbReference>
<dbReference type="InterPro" id="IPR000597">
    <property type="entry name" value="Ribosomal_uL3"/>
</dbReference>
<dbReference type="InterPro" id="IPR019927">
    <property type="entry name" value="Ribosomal_uL3_bac/org-type"/>
</dbReference>
<dbReference type="InterPro" id="IPR019926">
    <property type="entry name" value="Ribosomal_uL3_CS"/>
</dbReference>
<dbReference type="InterPro" id="IPR009000">
    <property type="entry name" value="Transl_B-barrel_sf"/>
</dbReference>
<dbReference type="NCBIfam" id="TIGR03625">
    <property type="entry name" value="L3_bact"/>
    <property type="match status" value="1"/>
</dbReference>
<dbReference type="PANTHER" id="PTHR11229">
    <property type="entry name" value="50S RIBOSOMAL PROTEIN L3"/>
    <property type="match status" value="1"/>
</dbReference>
<dbReference type="PANTHER" id="PTHR11229:SF16">
    <property type="entry name" value="LARGE RIBOSOMAL SUBUNIT PROTEIN UL3C"/>
    <property type="match status" value="1"/>
</dbReference>
<dbReference type="Pfam" id="PF00297">
    <property type="entry name" value="Ribosomal_L3"/>
    <property type="match status" value="1"/>
</dbReference>
<dbReference type="SUPFAM" id="SSF50447">
    <property type="entry name" value="Translation proteins"/>
    <property type="match status" value="1"/>
</dbReference>
<dbReference type="PROSITE" id="PS00474">
    <property type="entry name" value="RIBOSOMAL_L3"/>
    <property type="match status" value="1"/>
</dbReference>
<comment type="function">
    <text evidence="1">One of the primary rRNA binding proteins, it binds directly near the 3'-end of the 23S rRNA, where it nucleates assembly of the 50S subunit.</text>
</comment>
<comment type="subunit">
    <text evidence="1">Part of the 50S ribosomal subunit. Forms a cluster with proteins L14 and L19.</text>
</comment>
<comment type="similarity">
    <text evidence="1">Belongs to the universal ribosomal protein uL3 family.</text>
</comment>
<organism>
    <name type="scientific">Listeria monocytogenes serotype 4a (strain HCC23)</name>
    <dbReference type="NCBI Taxonomy" id="552536"/>
    <lineage>
        <taxon>Bacteria</taxon>
        <taxon>Bacillati</taxon>
        <taxon>Bacillota</taxon>
        <taxon>Bacilli</taxon>
        <taxon>Bacillales</taxon>
        <taxon>Listeriaceae</taxon>
        <taxon>Listeria</taxon>
    </lineage>
</organism>
<protein>
    <recommendedName>
        <fullName evidence="1">Large ribosomal subunit protein uL3</fullName>
    </recommendedName>
    <alternativeName>
        <fullName evidence="3">50S ribosomal protein L3</fullName>
    </alternativeName>
</protein>
<name>RL3_LISMH</name>
<evidence type="ECO:0000255" key="1">
    <source>
        <dbReference type="HAMAP-Rule" id="MF_01325"/>
    </source>
</evidence>
<evidence type="ECO:0000256" key="2">
    <source>
        <dbReference type="SAM" id="MobiDB-lite"/>
    </source>
</evidence>
<evidence type="ECO:0000305" key="3"/>
<feature type="chain" id="PRO_1000165891" description="Large ribosomal subunit protein uL3">
    <location>
        <begin position="1"/>
        <end position="209"/>
    </location>
</feature>
<feature type="region of interest" description="Disordered" evidence="2">
    <location>
        <begin position="126"/>
        <end position="148"/>
    </location>
</feature>
<gene>
    <name evidence="1" type="primary">rplC</name>
    <name type="ordered locus">LMHCC_2902</name>
</gene>
<keyword id="KW-0687">Ribonucleoprotein</keyword>
<keyword id="KW-0689">Ribosomal protein</keyword>
<keyword id="KW-0694">RNA-binding</keyword>
<keyword id="KW-0699">rRNA-binding</keyword>
<accession>B8DB08</accession>
<sequence>MTKGILGRKVGMTQVFTENGELIPVTVIEAAQNVVLQKKTVETDGYEAVQIGFEDKRAILSNKPEQGHVAKANTTPKRFIREFRDVNLDEYEIGAEVKVDVFAEGDIIDATGVSKGKGFQGVIKRHGQSRGPMAHGSRYHRRPGSMGPVAPNRVFKNKLLPGRMGGEQITIQNLEIVKVDVEKNVLLVKGNVPGAKKALVQIKTATKAK</sequence>
<reference key="1">
    <citation type="journal article" date="2011" name="J. Bacteriol.">
        <title>Genome sequence of lineage III Listeria monocytogenes strain HCC23.</title>
        <authorList>
            <person name="Steele C.L."/>
            <person name="Donaldson J.R."/>
            <person name="Paul D."/>
            <person name="Banes M.M."/>
            <person name="Arick T."/>
            <person name="Bridges S.M."/>
            <person name="Lawrence M.L."/>
        </authorList>
    </citation>
    <scope>NUCLEOTIDE SEQUENCE [LARGE SCALE GENOMIC DNA]</scope>
    <source>
        <strain>HCC23</strain>
    </source>
</reference>
<proteinExistence type="inferred from homology"/>